<accession>Q9HGY1</accession>
<name>GPD2_ZYGRO</name>
<comment type="catalytic activity">
    <reaction>
        <text>sn-glycerol 3-phosphate + NAD(+) = dihydroxyacetone phosphate + NADH + H(+)</text>
        <dbReference type="Rhea" id="RHEA:11092"/>
        <dbReference type="ChEBI" id="CHEBI:15378"/>
        <dbReference type="ChEBI" id="CHEBI:57540"/>
        <dbReference type="ChEBI" id="CHEBI:57597"/>
        <dbReference type="ChEBI" id="CHEBI:57642"/>
        <dbReference type="ChEBI" id="CHEBI:57945"/>
        <dbReference type="EC" id="1.1.1.8"/>
    </reaction>
</comment>
<comment type="subcellular location">
    <subcellularLocation>
        <location evidence="2">Cytoplasm</location>
    </subcellularLocation>
</comment>
<comment type="similarity">
    <text evidence="2">Belongs to the NAD-dependent glycerol-3-phosphate dehydrogenase family.</text>
</comment>
<feature type="chain" id="PRO_0000138102" description="Glycerol-3-phosphate dehydrogenase [NAD(+)] 2">
    <location>
        <begin position="1"/>
        <end position="389"/>
    </location>
</feature>
<feature type="active site" description="Proton acceptor" evidence="1">
    <location>
        <position position="244"/>
    </location>
</feature>
<feature type="binding site" evidence="1">
    <location>
        <begin position="40"/>
        <end position="45"/>
    </location>
    <ligand>
        <name>NAD(+)</name>
        <dbReference type="ChEBI" id="CHEBI:57540"/>
    </ligand>
</feature>
<feature type="binding site" evidence="1">
    <location>
        <position position="128"/>
    </location>
    <ligand>
        <name>NAD(+)</name>
        <dbReference type="ChEBI" id="CHEBI:57540"/>
    </ligand>
</feature>
<feature type="binding site" evidence="1">
    <location>
        <position position="151"/>
    </location>
    <ligand>
        <name>NAD(+)</name>
        <dbReference type="ChEBI" id="CHEBI:57540"/>
    </ligand>
</feature>
<feature type="binding site" evidence="1">
    <location>
        <position position="151"/>
    </location>
    <ligand>
        <name>substrate</name>
    </ligand>
</feature>
<feature type="binding site" evidence="1">
    <location>
        <position position="184"/>
    </location>
    <ligand>
        <name>NAD(+)</name>
        <dbReference type="ChEBI" id="CHEBI:57540"/>
    </ligand>
</feature>
<feature type="binding site" evidence="1">
    <location>
        <begin position="309"/>
        <end position="310"/>
    </location>
    <ligand>
        <name>substrate</name>
    </ligand>
</feature>
<feature type="binding site" evidence="1">
    <location>
        <position position="309"/>
    </location>
    <ligand>
        <name>NAD(+)</name>
        <dbReference type="ChEBI" id="CHEBI:57540"/>
    </ligand>
</feature>
<feature type="binding site" evidence="1">
    <location>
        <position position="338"/>
    </location>
    <ligand>
        <name>NAD(+)</name>
        <dbReference type="ChEBI" id="CHEBI:57540"/>
    </ligand>
</feature>
<evidence type="ECO:0000250" key="1"/>
<evidence type="ECO:0000305" key="2"/>
<dbReference type="EC" id="1.1.1.8"/>
<dbReference type="EMBL" id="AB047395">
    <property type="protein sequence ID" value="BAB11958.1"/>
    <property type="molecule type" value="mRNA"/>
</dbReference>
<dbReference type="SMR" id="Q9HGY1"/>
<dbReference type="eggNOG" id="KOG2711">
    <property type="taxonomic scope" value="Eukaryota"/>
</dbReference>
<dbReference type="GO" id="GO:0005829">
    <property type="term" value="C:cytosol"/>
    <property type="evidence" value="ECO:0007669"/>
    <property type="project" value="TreeGrafter"/>
</dbReference>
<dbReference type="GO" id="GO:0005634">
    <property type="term" value="C:nucleus"/>
    <property type="evidence" value="ECO:0007669"/>
    <property type="project" value="TreeGrafter"/>
</dbReference>
<dbReference type="GO" id="GO:0141152">
    <property type="term" value="F:glycerol-3-phosphate dehydrogenase (NAD+) activity"/>
    <property type="evidence" value="ECO:0007669"/>
    <property type="project" value="UniProtKB-EC"/>
</dbReference>
<dbReference type="GO" id="GO:0051287">
    <property type="term" value="F:NAD binding"/>
    <property type="evidence" value="ECO:0007669"/>
    <property type="project" value="InterPro"/>
</dbReference>
<dbReference type="GO" id="GO:0042803">
    <property type="term" value="F:protein homodimerization activity"/>
    <property type="evidence" value="ECO:0007669"/>
    <property type="project" value="InterPro"/>
</dbReference>
<dbReference type="GO" id="GO:0005975">
    <property type="term" value="P:carbohydrate metabolic process"/>
    <property type="evidence" value="ECO:0007669"/>
    <property type="project" value="InterPro"/>
</dbReference>
<dbReference type="GO" id="GO:0046168">
    <property type="term" value="P:glycerol-3-phosphate catabolic process"/>
    <property type="evidence" value="ECO:0007669"/>
    <property type="project" value="InterPro"/>
</dbReference>
<dbReference type="FunFam" id="1.10.1040.10:FF:000004">
    <property type="entry name" value="Glycerol-3-phosphate dehydrogenase [NAD(+)]"/>
    <property type="match status" value="1"/>
</dbReference>
<dbReference type="FunFam" id="3.40.50.720:FF:000294">
    <property type="entry name" value="Glycerol-3-phosphate dehydrogenase [NAD(+)]"/>
    <property type="match status" value="1"/>
</dbReference>
<dbReference type="Gene3D" id="1.10.1040.10">
    <property type="entry name" value="N-(1-d-carboxylethyl)-l-norvaline Dehydrogenase, domain 2"/>
    <property type="match status" value="1"/>
</dbReference>
<dbReference type="Gene3D" id="3.40.50.720">
    <property type="entry name" value="NAD(P)-binding Rossmann-like Domain"/>
    <property type="match status" value="1"/>
</dbReference>
<dbReference type="InterPro" id="IPR008927">
    <property type="entry name" value="6-PGluconate_DH-like_C_sf"/>
</dbReference>
<dbReference type="InterPro" id="IPR013328">
    <property type="entry name" value="6PGD_dom2"/>
</dbReference>
<dbReference type="InterPro" id="IPR006168">
    <property type="entry name" value="G3P_DH_NAD-dep"/>
</dbReference>
<dbReference type="InterPro" id="IPR006109">
    <property type="entry name" value="G3P_DH_NAD-dep_C"/>
</dbReference>
<dbReference type="InterPro" id="IPR017751">
    <property type="entry name" value="G3P_DH_NAD-dep_euk"/>
</dbReference>
<dbReference type="InterPro" id="IPR011128">
    <property type="entry name" value="G3P_DH_NAD-dep_N"/>
</dbReference>
<dbReference type="InterPro" id="IPR036291">
    <property type="entry name" value="NAD(P)-bd_dom_sf"/>
</dbReference>
<dbReference type="NCBIfam" id="TIGR03376">
    <property type="entry name" value="glycerol3P_DH"/>
    <property type="match status" value="1"/>
</dbReference>
<dbReference type="PANTHER" id="PTHR11728">
    <property type="entry name" value="GLYCEROL-3-PHOSPHATE DEHYDROGENASE"/>
    <property type="match status" value="1"/>
</dbReference>
<dbReference type="PANTHER" id="PTHR11728:SF8">
    <property type="entry name" value="GLYCEROL-3-PHOSPHATE DEHYDROGENASE [NAD(+)]-RELATED"/>
    <property type="match status" value="1"/>
</dbReference>
<dbReference type="Pfam" id="PF07479">
    <property type="entry name" value="NAD_Gly3P_dh_C"/>
    <property type="match status" value="1"/>
</dbReference>
<dbReference type="Pfam" id="PF01210">
    <property type="entry name" value="NAD_Gly3P_dh_N"/>
    <property type="match status" value="1"/>
</dbReference>
<dbReference type="PIRSF" id="PIRSF000114">
    <property type="entry name" value="Glycerol-3-P_dh"/>
    <property type="match status" value="1"/>
</dbReference>
<dbReference type="PRINTS" id="PR00077">
    <property type="entry name" value="GPDHDRGNASE"/>
</dbReference>
<dbReference type="SUPFAM" id="SSF48179">
    <property type="entry name" value="6-phosphogluconate dehydrogenase C-terminal domain-like"/>
    <property type="match status" value="1"/>
</dbReference>
<dbReference type="SUPFAM" id="SSF51735">
    <property type="entry name" value="NAD(P)-binding Rossmann-fold domains"/>
    <property type="match status" value="1"/>
</dbReference>
<dbReference type="PROSITE" id="PS00957">
    <property type="entry name" value="NAD_G3PDH"/>
    <property type="match status" value="1"/>
</dbReference>
<gene>
    <name type="primary">GPD2</name>
</gene>
<sequence>MAATDRLNQTSDILSHSMKKTDTSMSIVTAENPYKVAVVGSGNWGTTIAKVVAENTKEKPELFQGRVDMWVFEEQIDGTPLTQIINTKHQNVKYLPNIDLPGNLVANPDLISTTKDADVIVFNVPHQFLGRIVSQMKGQIKPDARAISCLKGFEVGPKGVQLLSDYVTQELGIQCGALSGANLAPEVAKEHWSETTVAYQVPDDFKGEGKDIDHRVLKQLFHRPYFHVNVIDDVAGISIAGALKNVVALGCGFVTGLGWGNNAAAAIQRVGLGEIIKFGRMFFPESKVETYYQESAGVADLITTCSGGRNVRVATEMAKTGKSGEQVEKDILNGQSAQGLITAKEVHQWLESSGHTEEYPLFEAVYQITYENVPMKELPSMIEELDIVE</sequence>
<protein>
    <recommendedName>
        <fullName>Glycerol-3-phosphate dehydrogenase [NAD(+)] 2</fullName>
        <ecNumber>1.1.1.8</ecNumber>
    </recommendedName>
    <alternativeName>
        <fullName>ZrGPD2</fullName>
    </alternativeName>
</protein>
<proteinExistence type="evidence at transcript level"/>
<reference key="1">
    <citation type="journal article" date="2001" name="Yeast">
        <title>Cloning of glycerol-3-phosphate dehydrogenase genes (ZrGPD1 and ZrGPD2) and glycerol dehydrogenase genes (ZrGCY1 and ZrGCY2) from the salt-tolerant yeast Zygosaccharomyces rouxii.</title>
        <authorList>
            <person name="Iwaki T."/>
            <person name="Kurono S."/>
            <person name="Yokose Y."/>
            <person name="Kubota K."/>
            <person name="Tamai Y."/>
            <person name="Watanabe Y."/>
        </authorList>
    </citation>
    <scope>NUCLEOTIDE SEQUENCE [MRNA]</scope>
    <source>
        <strain>ATCC 42981 / IAM 12879 / JCM 22060 / S-96</strain>
    </source>
</reference>
<organism>
    <name type="scientific">Zygosaccharomyces rouxii</name>
    <dbReference type="NCBI Taxonomy" id="4956"/>
    <lineage>
        <taxon>Eukaryota</taxon>
        <taxon>Fungi</taxon>
        <taxon>Dikarya</taxon>
        <taxon>Ascomycota</taxon>
        <taxon>Saccharomycotina</taxon>
        <taxon>Saccharomycetes</taxon>
        <taxon>Saccharomycetales</taxon>
        <taxon>Saccharomycetaceae</taxon>
        <taxon>Zygosaccharomyces</taxon>
    </lineage>
</organism>
<keyword id="KW-0963">Cytoplasm</keyword>
<keyword id="KW-0520">NAD</keyword>
<keyword id="KW-0560">Oxidoreductase</keyword>